<evidence type="ECO:0000255" key="1">
    <source>
        <dbReference type="HAMAP-Rule" id="MF_00435"/>
    </source>
</evidence>
<evidence type="ECO:0000255" key="2">
    <source>
        <dbReference type="PROSITE-ProRule" id="PRU01197"/>
    </source>
</evidence>
<evidence type="ECO:0000255" key="3">
    <source>
        <dbReference type="PROSITE-ProRule" id="PRU01198"/>
    </source>
</evidence>
<organism>
    <name type="scientific">Klebsiella pneumoniae subsp. pneumoniae (strain ATCC 700721 / MGH 78578)</name>
    <dbReference type="NCBI Taxonomy" id="272620"/>
    <lineage>
        <taxon>Bacteria</taxon>
        <taxon>Pseudomonadati</taxon>
        <taxon>Pseudomonadota</taxon>
        <taxon>Gammaproteobacteria</taxon>
        <taxon>Enterobacterales</taxon>
        <taxon>Enterobacteriaceae</taxon>
        <taxon>Klebsiella/Raoultella group</taxon>
        <taxon>Klebsiella</taxon>
        <taxon>Klebsiella pneumoniae complex</taxon>
    </lineage>
</organism>
<gene>
    <name evidence="1" type="primary">ilvC</name>
    <name type="ordered locus">KPN78578_42210</name>
    <name type="ORF">KPN_04273</name>
</gene>
<sequence length="491" mass="53952">MANYFNTLNLRQQLAQLGKCRFMARDEFADGASYLQGKKVVIVGCGAQGLNQGLNMRDSGLDISYALRKEAIAEKRASWRKATENGFKVGTYEELIPQADLVVNLTPDKQHSDVVRSVQPLMKDGAALGYSHGFNIVEVGEQIRKDITVVMVAPKCPGTEVREEYKRGFGVPTLIAVHPENDPKGEGMAIAKAWAAATGGHRAGVLESSFVAEVKSDLMGEQTILCGMLQAGSLLCFDKLVAEGTDPAYAEKLIQFGWETITEALKQGGITLMMDRLSNPAKLRAYALSEQLKEIMAPLFQKHMDDIISGEFSSGMMADWANDDKKLLTWREETGKTAFETAPQYEGKIGEQEYFDKGVLMIAMVKAGVELAFETMVASGIIEESAYYESLHELPLIANTIARKRLYEMNVVISDTAEYGNYLFSYACVPLLKEFMTTLQTGDLGTAIAEGAVDNAQLRDVNEAIRSHAIEQVGKKLRGYMTDMKRIAVAG</sequence>
<dbReference type="EC" id="1.1.1.86" evidence="1"/>
<dbReference type="EMBL" id="CP000647">
    <property type="protein sequence ID" value="ABR79645.1"/>
    <property type="molecule type" value="Genomic_DNA"/>
</dbReference>
<dbReference type="RefSeq" id="WP_002883178.1">
    <property type="nucleotide sequence ID" value="NC_009648.1"/>
</dbReference>
<dbReference type="SMR" id="A6TGG1"/>
<dbReference type="STRING" id="272620.KPN_04273"/>
<dbReference type="jPOST" id="A6TGG1"/>
<dbReference type="PaxDb" id="272620-KPN_04273"/>
<dbReference type="EnsemblBacteria" id="ABR79645">
    <property type="protein sequence ID" value="ABR79645"/>
    <property type="gene ID" value="KPN_04273"/>
</dbReference>
<dbReference type="KEGG" id="kpn:KPN_04273"/>
<dbReference type="HOGENOM" id="CLU_551905_0_0_6"/>
<dbReference type="BRENDA" id="1.1.1.86">
    <property type="organism ID" value="2817"/>
</dbReference>
<dbReference type="UniPathway" id="UPA00047">
    <property type="reaction ID" value="UER00056"/>
</dbReference>
<dbReference type="UniPathway" id="UPA00049">
    <property type="reaction ID" value="UER00060"/>
</dbReference>
<dbReference type="Proteomes" id="UP000000265">
    <property type="component" value="Chromosome"/>
</dbReference>
<dbReference type="GO" id="GO:0005829">
    <property type="term" value="C:cytosol"/>
    <property type="evidence" value="ECO:0007669"/>
    <property type="project" value="TreeGrafter"/>
</dbReference>
<dbReference type="GO" id="GO:0004455">
    <property type="term" value="F:ketol-acid reductoisomerase activity"/>
    <property type="evidence" value="ECO:0007669"/>
    <property type="project" value="UniProtKB-UniRule"/>
</dbReference>
<dbReference type="GO" id="GO:0000287">
    <property type="term" value="F:magnesium ion binding"/>
    <property type="evidence" value="ECO:0007669"/>
    <property type="project" value="UniProtKB-UniRule"/>
</dbReference>
<dbReference type="GO" id="GO:0009097">
    <property type="term" value="P:isoleucine biosynthetic process"/>
    <property type="evidence" value="ECO:0007669"/>
    <property type="project" value="UniProtKB-UniRule"/>
</dbReference>
<dbReference type="GO" id="GO:0009099">
    <property type="term" value="P:L-valine biosynthetic process"/>
    <property type="evidence" value="ECO:0007669"/>
    <property type="project" value="UniProtKB-UniRule"/>
</dbReference>
<dbReference type="FunFam" id="1.10.1040.10:FF:000007">
    <property type="entry name" value="Ketol-acid reductoisomerase (NADP(+))"/>
    <property type="match status" value="1"/>
</dbReference>
<dbReference type="FunFam" id="3.40.50.720:FF:000043">
    <property type="entry name" value="Ketol-acid reductoisomerase (NADP(+))"/>
    <property type="match status" value="1"/>
</dbReference>
<dbReference type="Gene3D" id="1.10.1040.10">
    <property type="entry name" value="N-(1-d-carboxylethyl)-l-norvaline Dehydrogenase, domain 2"/>
    <property type="match status" value="1"/>
</dbReference>
<dbReference type="Gene3D" id="3.40.50.720">
    <property type="entry name" value="NAD(P)-binding Rossmann-like Domain"/>
    <property type="match status" value="1"/>
</dbReference>
<dbReference type="HAMAP" id="MF_00435">
    <property type="entry name" value="IlvC"/>
    <property type="match status" value="1"/>
</dbReference>
<dbReference type="InterPro" id="IPR008927">
    <property type="entry name" value="6-PGluconate_DH-like_C_sf"/>
</dbReference>
<dbReference type="InterPro" id="IPR013328">
    <property type="entry name" value="6PGD_dom2"/>
</dbReference>
<dbReference type="InterPro" id="IPR013023">
    <property type="entry name" value="KARI"/>
</dbReference>
<dbReference type="InterPro" id="IPR000506">
    <property type="entry name" value="KARI_C"/>
</dbReference>
<dbReference type="InterPro" id="IPR013116">
    <property type="entry name" value="KARI_N"/>
</dbReference>
<dbReference type="InterPro" id="IPR036291">
    <property type="entry name" value="NAD(P)-bd_dom_sf"/>
</dbReference>
<dbReference type="NCBIfam" id="TIGR00465">
    <property type="entry name" value="ilvC"/>
    <property type="match status" value="1"/>
</dbReference>
<dbReference type="NCBIfam" id="NF003557">
    <property type="entry name" value="PRK05225.1"/>
    <property type="match status" value="1"/>
</dbReference>
<dbReference type="PANTHER" id="PTHR21371">
    <property type="entry name" value="KETOL-ACID REDUCTOISOMERASE, MITOCHONDRIAL"/>
    <property type="match status" value="1"/>
</dbReference>
<dbReference type="PANTHER" id="PTHR21371:SF1">
    <property type="entry name" value="KETOL-ACID REDUCTOISOMERASE, MITOCHONDRIAL"/>
    <property type="match status" value="1"/>
</dbReference>
<dbReference type="Pfam" id="PF01450">
    <property type="entry name" value="KARI_C"/>
    <property type="match status" value="2"/>
</dbReference>
<dbReference type="Pfam" id="PF07991">
    <property type="entry name" value="KARI_N"/>
    <property type="match status" value="1"/>
</dbReference>
<dbReference type="SUPFAM" id="SSF48179">
    <property type="entry name" value="6-phosphogluconate dehydrogenase C-terminal domain-like"/>
    <property type="match status" value="2"/>
</dbReference>
<dbReference type="SUPFAM" id="SSF51735">
    <property type="entry name" value="NAD(P)-binding Rossmann-fold domains"/>
    <property type="match status" value="1"/>
</dbReference>
<dbReference type="PROSITE" id="PS51851">
    <property type="entry name" value="KARI_C"/>
    <property type="match status" value="2"/>
</dbReference>
<dbReference type="PROSITE" id="PS51850">
    <property type="entry name" value="KARI_N"/>
    <property type="match status" value="1"/>
</dbReference>
<name>ILVC_KLEP7</name>
<feature type="chain" id="PRO_1000050520" description="Ketol-acid reductoisomerase (NADP(+))">
    <location>
        <begin position="1"/>
        <end position="491"/>
    </location>
</feature>
<feature type="domain" description="KARI N-terminal Rossmann" evidence="2">
    <location>
        <begin position="15"/>
        <end position="208"/>
    </location>
</feature>
<feature type="domain" description="KARI C-terminal knotted 1" evidence="3">
    <location>
        <begin position="209"/>
        <end position="344"/>
    </location>
</feature>
<feature type="domain" description="KARI C-terminal knotted 2" evidence="3">
    <location>
        <begin position="345"/>
        <end position="484"/>
    </location>
</feature>
<feature type="active site" evidence="1">
    <location>
        <position position="132"/>
    </location>
</feature>
<feature type="binding site" evidence="1">
    <location>
        <begin position="45"/>
        <end position="48"/>
    </location>
    <ligand>
        <name>NADP(+)</name>
        <dbReference type="ChEBI" id="CHEBI:58349"/>
    </ligand>
</feature>
<feature type="binding site" evidence="1">
    <location>
        <position position="68"/>
    </location>
    <ligand>
        <name>NADP(+)</name>
        <dbReference type="ChEBI" id="CHEBI:58349"/>
    </ligand>
</feature>
<feature type="binding site" evidence="1">
    <location>
        <position position="76"/>
    </location>
    <ligand>
        <name>NADP(+)</name>
        <dbReference type="ChEBI" id="CHEBI:58349"/>
    </ligand>
</feature>
<feature type="binding site" evidence="1">
    <location>
        <position position="78"/>
    </location>
    <ligand>
        <name>NADP(+)</name>
        <dbReference type="ChEBI" id="CHEBI:58349"/>
    </ligand>
</feature>
<feature type="binding site" evidence="1">
    <location>
        <begin position="108"/>
        <end position="110"/>
    </location>
    <ligand>
        <name>NADP(+)</name>
        <dbReference type="ChEBI" id="CHEBI:58349"/>
    </ligand>
</feature>
<feature type="binding site" evidence="1">
    <location>
        <position position="158"/>
    </location>
    <ligand>
        <name>NADP(+)</name>
        <dbReference type="ChEBI" id="CHEBI:58349"/>
    </ligand>
</feature>
<feature type="binding site" evidence="1">
    <location>
        <position position="217"/>
    </location>
    <ligand>
        <name>Mg(2+)</name>
        <dbReference type="ChEBI" id="CHEBI:18420"/>
        <label>1</label>
    </ligand>
</feature>
<feature type="binding site" evidence="1">
    <location>
        <position position="217"/>
    </location>
    <ligand>
        <name>Mg(2+)</name>
        <dbReference type="ChEBI" id="CHEBI:18420"/>
        <label>2</label>
    </ligand>
</feature>
<feature type="binding site" evidence="1">
    <location>
        <position position="221"/>
    </location>
    <ligand>
        <name>Mg(2+)</name>
        <dbReference type="ChEBI" id="CHEBI:18420"/>
        <label>1</label>
    </ligand>
</feature>
<feature type="binding site" evidence="1">
    <location>
        <position position="389"/>
    </location>
    <ligand>
        <name>Mg(2+)</name>
        <dbReference type="ChEBI" id="CHEBI:18420"/>
        <label>2</label>
    </ligand>
</feature>
<feature type="binding site" evidence="1">
    <location>
        <position position="393"/>
    </location>
    <ligand>
        <name>Mg(2+)</name>
        <dbReference type="ChEBI" id="CHEBI:18420"/>
        <label>2</label>
    </ligand>
</feature>
<feature type="binding site" evidence="1">
    <location>
        <position position="414"/>
    </location>
    <ligand>
        <name>substrate</name>
    </ligand>
</feature>
<keyword id="KW-0028">Amino-acid biosynthesis</keyword>
<keyword id="KW-0100">Branched-chain amino acid biosynthesis</keyword>
<keyword id="KW-0460">Magnesium</keyword>
<keyword id="KW-0479">Metal-binding</keyword>
<keyword id="KW-0521">NADP</keyword>
<keyword id="KW-0560">Oxidoreductase</keyword>
<keyword id="KW-0677">Repeat</keyword>
<accession>A6TGG1</accession>
<comment type="function">
    <text evidence="1">Involved in the biosynthesis of branched-chain amino acids (BCAA). Catalyzes an alkyl-migration followed by a ketol-acid reduction of (S)-2-acetolactate (S2AL) to yield (R)-2,3-dihydroxy-isovalerate. In the isomerase reaction, S2AL is rearranged via a Mg-dependent methyl migration to produce 3-hydroxy-3-methyl-2-ketobutyrate (HMKB). In the reductase reaction, this 2-ketoacid undergoes a metal-dependent reduction by NADPH to yield (R)-2,3-dihydroxy-isovalerate.</text>
</comment>
<comment type="catalytic activity">
    <reaction evidence="1">
        <text>(2R)-2,3-dihydroxy-3-methylbutanoate + NADP(+) = (2S)-2-acetolactate + NADPH + H(+)</text>
        <dbReference type="Rhea" id="RHEA:22068"/>
        <dbReference type="ChEBI" id="CHEBI:15378"/>
        <dbReference type="ChEBI" id="CHEBI:49072"/>
        <dbReference type="ChEBI" id="CHEBI:57783"/>
        <dbReference type="ChEBI" id="CHEBI:58349"/>
        <dbReference type="ChEBI" id="CHEBI:58476"/>
        <dbReference type="EC" id="1.1.1.86"/>
    </reaction>
</comment>
<comment type="catalytic activity">
    <reaction evidence="1">
        <text>(2R,3R)-2,3-dihydroxy-3-methylpentanoate + NADP(+) = (S)-2-ethyl-2-hydroxy-3-oxobutanoate + NADPH + H(+)</text>
        <dbReference type="Rhea" id="RHEA:13493"/>
        <dbReference type="ChEBI" id="CHEBI:15378"/>
        <dbReference type="ChEBI" id="CHEBI:49256"/>
        <dbReference type="ChEBI" id="CHEBI:49258"/>
        <dbReference type="ChEBI" id="CHEBI:57783"/>
        <dbReference type="ChEBI" id="CHEBI:58349"/>
        <dbReference type="EC" id="1.1.1.86"/>
    </reaction>
</comment>
<comment type="cofactor">
    <cofactor evidence="1">
        <name>Mg(2+)</name>
        <dbReference type="ChEBI" id="CHEBI:18420"/>
    </cofactor>
    <text evidence="1">Binds 2 magnesium ions per subunit.</text>
</comment>
<comment type="pathway">
    <text evidence="1">Amino-acid biosynthesis; L-isoleucine biosynthesis; L-isoleucine from 2-oxobutanoate: step 2/4.</text>
</comment>
<comment type="pathway">
    <text evidence="1">Amino-acid biosynthesis; L-valine biosynthesis; L-valine from pyruvate: step 2/4.</text>
</comment>
<comment type="similarity">
    <text evidence="1">Belongs to the ketol-acid reductoisomerase family.</text>
</comment>
<reference key="1">
    <citation type="submission" date="2006-09" db="EMBL/GenBank/DDBJ databases">
        <authorList>
            <consortium name="The Klebsiella pneumonia Genome Sequencing Project"/>
            <person name="McClelland M."/>
            <person name="Sanderson E.K."/>
            <person name="Spieth J."/>
            <person name="Clifton W.S."/>
            <person name="Latreille P."/>
            <person name="Sabo A."/>
            <person name="Pepin K."/>
            <person name="Bhonagiri V."/>
            <person name="Porwollik S."/>
            <person name="Ali J."/>
            <person name="Wilson R.K."/>
        </authorList>
    </citation>
    <scope>NUCLEOTIDE SEQUENCE [LARGE SCALE GENOMIC DNA]</scope>
    <source>
        <strain>ATCC 700721 / MGH 78578</strain>
    </source>
</reference>
<proteinExistence type="inferred from homology"/>
<protein>
    <recommendedName>
        <fullName evidence="1">Ketol-acid reductoisomerase (NADP(+))</fullName>
        <shortName evidence="1">KARI</shortName>
        <ecNumber evidence="1">1.1.1.86</ecNumber>
    </recommendedName>
    <alternativeName>
        <fullName evidence="1">Acetohydroxy-acid isomeroreductase</fullName>
        <shortName evidence="1">AHIR</shortName>
    </alternativeName>
    <alternativeName>
        <fullName evidence="1">Alpha-keto-beta-hydroxylacyl reductoisomerase</fullName>
    </alternativeName>
    <alternativeName>
        <fullName evidence="1">Ketol-acid reductoisomerase type 2</fullName>
    </alternativeName>
    <alternativeName>
        <fullName evidence="1">Ketol-acid reductoisomerase type II</fullName>
    </alternativeName>
</protein>